<reference key="1">
    <citation type="journal article" date="2013" name="Appl. Environ. Microbiol.">
        <title>The genome of the alga-associated marine flavobacterium Formosa agariphila KMM 3901T reveals a broad potential for degradation of algal polysaccharides.</title>
        <authorList>
            <person name="Mann A.J."/>
            <person name="Hahnke R.L."/>
            <person name="Huang S."/>
            <person name="Werner J."/>
            <person name="Xing P."/>
            <person name="Barbeyron T."/>
            <person name="Huettel B."/>
            <person name="Stueber K."/>
            <person name="Reinhardt R."/>
            <person name="Harder J."/>
            <person name="Gloeckner F.O."/>
            <person name="Amann R.I."/>
            <person name="Teeling H."/>
        </authorList>
    </citation>
    <scope>NUCLEOTIDE SEQUENCE [LARGE SCALE GENOMIC DNA]</scope>
    <source>
        <strain>DSM 15362 / KCTC 12365 / LMG 23005 / KMM 3901 / M-2Alg 35-1</strain>
    </source>
</reference>
<reference key="2">
    <citation type="journal article" date="2019" name="Nat. Chem. Biol.">
        <title>A marine bacterial enzymatic cascade degrades the algal polysaccharide ulvan.</title>
        <authorList>
            <person name="Reisky L."/>
            <person name="Prechoux A."/>
            <person name="Zuehlke M.K."/>
            <person name="Baeumgen M."/>
            <person name="Robb C.S."/>
            <person name="Gerlach N."/>
            <person name="Roret T."/>
            <person name="Stanetty C."/>
            <person name="Larocque R."/>
            <person name="Michel G."/>
            <person name="Song T."/>
            <person name="Markert S."/>
            <person name="Unfried F."/>
            <person name="Mihovilovic M.D."/>
            <person name="Trautwein-Schult A."/>
            <person name="Becher D."/>
            <person name="Schweder T."/>
            <person name="Bornscheuer U.T."/>
            <person name="Hehemann J.H."/>
        </authorList>
    </citation>
    <scope>X-RAY CRYSTALLOGRAPHY (1.47 ANGSTROMS)</scope>
    <scope>FUNCTION</scope>
    <scope>CATALYTIC ACTIVITY</scope>
    <scope>SUBUNIT</scope>
    <scope>SUBCELLULAR LOCATION</scope>
</reference>
<evidence type="ECO:0000250" key="1">
    <source>
        <dbReference type="UniProtKB" id="P32156"/>
    </source>
</evidence>
<evidence type="ECO:0000250" key="2">
    <source>
        <dbReference type="UniProtKB" id="Q7BSH1"/>
    </source>
</evidence>
<evidence type="ECO:0000269" key="3">
    <source>
    </source>
</evidence>
<evidence type="ECO:0000303" key="4">
    <source>
    </source>
</evidence>
<evidence type="ECO:0000305" key="5"/>
<evidence type="ECO:0000305" key="6">
    <source>
    </source>
</evidence>
<evidence type="ECO:0007829" key="7">
    <source>
        <dbReference type="PDB" id="6HHN"/>
    </source>
</evidence>
<proteinExistence type="evidence at protein level"/>
<organism>
    <name type="scientific">Formosa agariphila (strain DSM 15362 / KCTC 12365 / LMG 23005 / KMM 3901 / M-2Alg 35-1)</name>
    <dbReference type="NCBI Taxonomy" id="1347342"/>
    <lineage>
        <taxon>Bacteria</taxon>
        <taxon>Pseudomonadati</taxon>
        <taxon>Bacteroidota</taxon>
        <taxon>Flavobacteriia</taxon>
        <taxon>Flavobacteriales</taxon>
        <taxon>Flavobacteriaceae</taxon>
        <taxon>Formosa</taxon>
    </lineage>
</organism>
<name>PLH21_FORAG</name>
<accession>T2KM13</accession>
<dbReference type="EC" id="5.1.3.32" evidence="3"/>
<dbReference type="EMBL" id="HG315671">
    <property type="protein sequence ID" value="CDF79922.1"/>
    <property type="molecule type" value="Genomic_DNA"/>
</dbReference>
<dbReference type="RefSeq" id="WP_038530514.1">
    <property type="nucleotide sequence ID" value="NZ_HG315671.1"/>
</dbReference>
<dbReference type="PDB" id="6HHN">
    <property type="method" value="X-ray"/>
    <property type="resolution" value="1.47 A"/>
    <property type="chains" value="A=2-104"/>
</dbReference>
<dbReference type="PDBsum" id="6HHN"/>
<dbReference type="SMR" id="T2KM13"/>
<dbReference type="STRING" id="1347342.BN863_22100"/>
<dbReference type="PATRIC" id="fig|1347342.6.peg.2217"/>
<dbReference type="eggNOG" id="COG3254">
    <property type="taxonomic scope" value="Bacteria"/>
</dbReference>
<dbReference type="HOGENOM" id="CLU_100689_2_0_10"/>
<dbReference type="OrthoDB" id="9799608at2"/>
<dbReference type="UniPathway" id="UPA00125"/>
<dbReference type="Proteomes" id="UP000016160">
    <property type="component" value="Chromosome"/>
</dbReference>
<dbReference type="GO" id="GO:0005737">
    <property type="term" value="C:cytoplasm"/>
    <property type="evidence" value="ECO:0007669"/>
    <property type="project" value="UniProtKB-SubCell"/>
</dbReference>
<dbReference type="GO" id="GO:0062192">
    <property type="term" value="F:L-rhamnose mutarotase activity"/>
    <property type="evidence" value="ECO:0007669"/>
    <property type="project" value="UniProtKB-EC"/>
</dbReference>
<dbReference type="GO" id="GO:0019301">
    <property type="term" value="P:rhamnose catabolic process"/>
    <property type="evidence" value="ECO:0007669"/>
    <property type="project" value="TreeGrafter"/>
</dbReference>
<dbReference type="Gene3D" id="3.30.70.100">
    <property type="match status" value="1"/>
</dbReference>
<dbReference type="HAMAP" id="MF_01663">
    <property type="entry name" value="L_rham_rotase"/>
    <property type="match status" value="1"/>
</dbReference>
<dbReference type="InterPro" id="IPR011008">
    <property type="entry name" value="Dimeric_a/b-barrel"/>
</dbReference>
<dbReference type="InterPro" id="IPR013448">
    <property type="entry name" value="L-rhamnose_mutarotase"/>
</dbReference>
<dbReference type="InterPro" id="IPR008000">
    <property type="entry name" value="Rham/fucose_mutarotase"/>
</dbReference>
<dbReference type="NCBIfam" id="TIGR02625">
    <property type="entry name" value="YiiL_rotase"/>
    <property type="match status" value="1"/>
</dbReference>
<dbReference type="PANTHER" id="PTHR34389">
    <property type="entry name" value="L-RHAMNOSE MUTAROTASE"/>
    <property type="match status" value="1"/>
</dbReference>
<dbReference type="PANTHER" id="PTHR34389:SF2">
    <property type="entry name" value="L-RHAMNOSE MUTAROTASE"/>
    <property type="match status" value="1"/>
</dbReference>
<dbReference type="Pfam" id="PF05336">
    <property type="entry name" value="rhaM"/>
    <property type="match status" value="1"/>
</dbReference>
<dbReference type="SUPFAM" id="SSF54909">
    <property type="entry name" value="Dimeric alpha+beta barrel"/>
    <property type="match status" value="1"/>
</dbReference>
<sequence length="104" mass="12199">MERLAFKMKLNKGQKQAYKERHDQLWPELKQLLKDNGVSEYSIFIDEETNTLFAFQKVSGHGGSQDLANNEIVKKWWDFMADIMQVNPDNSPVSIPLEEVFYME</sequence>
<comment type="function">
    <text evidence="3 6">L-rhamnose mutarotase involved in ulvan degradation (PubMed:31285597). Ulvan is the main polysaccharide component of the Ulvales (green seaweed) cell wall. It is composed of disaccharide building blocks comprising 3-sulfated rhamnose (Rha3S) linked to D-glucuronic acid (GlcA), L-iduronic acid (IduA), or D-xylose (Xyl) (Probable). L-rhamnose mutarotase catalyzes the anomeric conversion of alpha- to beta-L-rhamnose (PubMed:31285597).</text>
</comment>
<comment type="catalytic activity">
    <reaction evidence="3">
        <text>alpha-L-rhamnose = beta-L-rhamnose</text>
        <dbReference type="Rhea" id="RHEA:25584"/>
        <dbReference type="ChEBI" id="CHEBI:27586"/>
        <dbReference type="ChEBI" id="CHEBI:27907"/>
        <dbReference type="EC" id="5.1.3.32"/>
    </reaction>
</comment>
<comment type="pathway">
    <text evidence="1">Carbohydrate metabolism; L-rhamnose metabolism.</text>
</comment>
<comment type="subunit">
    <text evidence="3">Homodimer.</text>
</comment>
<comment type="subcellular location">
    <subcellularLocation>
        <location evidence="3">Cytoplasm</location>
    </subcellularLocation>
</comment>
<comment type="similarity">
    <text evidence="5">Belongs to the rhamnose mutarotase family.</text>
</comment>
<gene>
    <name type="primary">rhaM</name>
    <name type="ORF">BN863_22100</name>
</gene>
<keyword id="KW-0002">3D-structure</keyword>
<keyword id="KW-0119">Carbohydrate metabolism</keyword>
<keyword id="KW-0963">Cytoplasm</keyword>
<keyword id="KW-0413">Isomerase</keyword>
<keyword id="KW-1185">Reference proteome</keyword>
<keyword id="KW-0684">Rhamnose metabolism</keyword>
<protein>
    <recommendedName>
        <fullName evidence="4">L-rhamnose mutarotase</fullName>
        <ecNumber evidence="3">5.1.3.32</ecNumber>
    </recommendedName>
    <alternativeName>
        <fullName evidence="4">P21_mutarotase</fullName>
    </alternativeName>
    <alternativeName>
        <fullName evidence="4">Polysaccharide utilization locus H protein P21</fullName>
        <shortName>PUL H protein P21</shortName>
    </alternativeName>
    <alternativeName>
        <fullName>Rhamnose 1-epimerase</fullName>
    </alternativeName>
    <alternativeName>
        <fullName>Type-3 mutarotase</fullName>
    </alternativeName>
</protein>
<feature type="chain" id="PRO_0000448333" description="L-rhamnose mutarotase">
    <location>
        <begin position="1"/>
        <end position="104"/>
    </location>
</feature>
<feature type="active site" description="Proton donor" evidence="2">
    <location>
        <position position="22"/>
    </location>
</feature>
<feature type="binding site" evidence="2">
    <location>
        <position position="18"/>
    </location>
    <ligand>
        <name>substrate</name>
    </ligand>
</feature>
<feature type="binding site" evidence="2">
    <location>
        <position position="41"/>
    </location>
    <ligand>
        <name>substrate</name>
    </ligand>
</feature>
<feature type="binding site" evidence="2">
    <location>
        <begin position="76"/>
        <end position="77"/>
    </location>
    <ligand>
        <name>substrate</name>
    </ligand>
</feature>
<feature type="strand" evidence="7">
    <location>
        <begin position="2"/>
        <end position="10"/>
    </location>
</feature>
<feature type="helix" evidence="7">
    <location>
        <begin position="15"/>
        <end position="23"/>
    </location>
</feature>
<feature type="helix" evidence="7">
    <location>
        <begin position="27"/>
        <end position="35"/>
    </location>
</feature>
<feature type="strand" evidence="7">
    <location>
        <begin position="38"/>
        <end position="46"/>
    </location>
</feature>
<feature type="helix" evidence="7">
    <location>
        <begin position="47"/>
        <end position="49"/>
    </location>
</feature>
<feature type="strand" evidence="7">
    <location>
        <begin position="51"/>
        <end position="58"/>
    </location>
</feature>
<feature type="helix" evidence="7">
    <location>
        <begin position="67"/>
        <end position="69"/>
    </location>
</feature>
<feature type="helix" evidence="7">
    <location>
        <begin position="71"/>
        <end position="80"/>
    </location>
</feature>
<feature type="turn" evidence="7">
    <location>
        <begin position="81"/>
        <end position="83"/>
    </location>
</feature>
<feature type="strand" evidence="7">
    <location>
        <begin position="95"/>
        <end position="97"/>
    </location>
</feature>